<dbReference type="EMBL" id="BC123202">
    <property type="protein sequence ID" value="AAI23203.1"/>
    <property type="molecule type" value="mRNA"/>
</dbReference>
<dbReference type="RefSeq" id="NP_001090342.1">
    <property type="nucleotide sequence ID" value="NM_001096873.1"/>
</dbReference>
<dbReference type="SMR" id="Q0IHD6"/>
<dbReference type="DNASU" id="779252"/>
<dbReference type="AGR" id="Xenbase:XB-GENE-985609"/>
<dbReference type="Xenbase" id="XB-GENE-985609">
    <property type="gene designation" value="pacc1.L"/>
</dbReference>
<dbReference type="Proteomes" id="UP000186698">
    <property type="component" value="Unplaced"/>
</dbReference>
<dbReference type="Bgee" id="779252">
    <property type="expression patterns" value="Expressed in internal ear and 16 other cell types or tissues"/>
</dbReference>
<dbReference type="GO" id="GO:0009986">
    <property type="term" value="C:cell surface"/>
    <property type="evidence" value="ECO:0007669"/>
    <property type="project" value="TreeGrafter"/>
</dbReference>
<dbReference type="GO" id="GO:0034707">
    <property type="term" value="C:chloride channel complex"/>
    <property type="evidence" value="ECO:0007669"/>
    <property type="project" value="UniProtKB-KW"/>
</dbReference>
<dbReference type="GO" id="GO:0005886">
    <property type="term" value="C:plasma membrane"/>
    <property type="evidence" value="ECO:0000250"/>
    <property type="project" value="UniProtKB"/>
</dbReference>
<dbReference type="GO" id="GO:0061797">
    <property type="term" value="F:pH-gated chloride channel activity"/>
    <property type="evidence" value="ECO:0000250"/>
    <property type="project" value="UniProtKB"/>
</dbReference>
<dbReference type="GO" id="GO:0006821">
    <property type="term" value="P:chloride transport"/>
    <property type="evidence" value="ECO:0000250"/>
    <property type="project" value="UniProtKB"/>
</dbReference>
<dbReference type="InterPro" id="IPR029366">
    <property type="entry name" value="TMEM206"/>
</dbReference>
<dbReference type="PANTHER" id="PTHR16087:SF0">
    <property type="entry name" value="PROTON-ACTIVATED CHLORIDE CHANNEL"/>
    <property type="match status" value="1"/>
</dbReference>
<dbReference type="PANTHER" id="PTHR16087">
    <property type="entry name" value="TRANSMEMBRANE PROTEIN 206"/>
    <property type="match status" value="1"/>
</dbReference>
<dbReference type="Pfam" id="PF15122">
    <property type="entry name" value="TMEM206"/>
    <property type="match status" value="1"/>
</dbReference>
<feature type="chain" id="PRO_0000279476" description="Proton-activated chloride channel">
    <location>
        <begin position="1"/>
        <end position="350"/>
    </location>
</feature>
<feature type="topological domain" description="Cytoplasmic" evidence="2">
    <location>
        <begin position="1"/>
        <end position="63"/>
    </location>
</feature>
<feature type="transmembrane region" description="Helical" evidence="3">
    <location>
        <begin position="64"/>
        <end position="84"/>
    </location>
</feature>
<feature type="topological domain" description="Extracellular" evidence="3">
    <location>
        <begin position="85"/>
        <end position="297"/>
    </location>
</feature>
<feature type="transmembrane region" description="Helical" evidence="3">
    <location>
        <begin position="298"/>
        <end position="318"/>
    </location>
</feature>
<feature type="topological domain" description="Cytoplasmic" evidence="2">
    <location>
        <begin position="319"/>
        <end position="350"/>
    </location>
</feature>
<feature type="region of interest" description="Disordered" evidence="4">
    <location>
        <begin position="1"/>
        <end position="51"/>
    </location>
</feature>
<name>PACC1_XENLA</name>
<keyword id="KW-1003">Cell membrane</keyword>
<keyword id="KW-0868">Chloride</keyword>
<keyword id="KW-0869">Chloride channel</keyword>
<keyword id="KW-0407">Ion channel</keyword>
<keyword id="KW-0406">Ion transport</keyword>
<keyword id="KW-0472">Membrane</keyword>
<keyword id="KW-1185">Reference proteome</keyword>
<keyword id="KW-0812">Transmembrane</keyword>
<keyword id="KW-1133">Transmembrane helix</keyword>
<keyword id="KW-0813">Transport</keyword>
<evidence type="ECO:0000250" key="1">
    <source>
        <dbReference type="UniProtKB" id="Q7SY31"/>
    </source>
</evidence>
<evidence type="ECO:0000250" key="2">
    <source>
        <dbReference type="UniProtKB" id="Q9H813"/>
    </source>
</evidence>
<evidence type="ECO:0000255" key="3"/>
<evidence type="ECO:0000256" key="4">
    <source>
        <dbReference type="SAM" id="MobiDB-lite"/>
    </source>
</evidence>
<evidence type="ECO:0000305" key="5"/>
<comment type="function">
    <text evidence="1">Chloride channel gated by pH that facilitates the entry of chloride ions into cells upon exposure to extracellular acidic pH.</text>
</comment>
<comment type="catalytic activity">
    <reaction evidence="2">
        <text>chloride(in) = chloride(out)</text>
        <dbReference type="Rhea" id="RHEA:29823"/>
        <dbReference type="ChEBI" id="CHEBI:17996"/>
    </reaction>
</comment>
<comment type="subcellular location">
    <subcellularLocation>
        <location evidence="2">Cell membrane</location>
        <topology evidence="2">Multi-pass membrane protein</topology>
    </subcellularLocation>
</comment>
<comment type="similarity">
    <text evidence="5">Belongs to the proton-activated chloride channel family.</text>
</comment>
<accession>Q0IHD6</accession>
<sequence>MEAIRKELSRSYQELNDETDPIARDPEGAQEEEQEEAASAVVPDRDSDRSNTRVHFSRTCLKNVFSVLLIFVYLLLMGVAVFLVYQTITDFRDKLKHPVMSVSYKEVNVYDAPGIALYPGKARLLSCKHHLYDHIPPLIDPGQPGENTCITQNISYTDPYTNSTVKHALIVQGPRDVRRRELVFLQFHLNETKQDFSAIDYLLFSSYDAFLKSTNRVRFMQDCESSFSSWKFSGGFRTWVKMSLVKTKEEDGSQSVEFRQETSVVNFIDRRENPDKGDQLFFVVFEWKDPYIQEIQDIITANPWSMIALLCSVFLVLFKAADFAKLSVKWMIKVRRRHLKKRTRELNHIS</sequence>
<reference key="1">
    <citation type="submission" date="2006-09" db="EMBL/GenBank/DDBJ databases">
        <authorList>
            <consortium name="NIH - Xenopus Gene Collection (XGC) project"/>
        </authorList>
    </citation>
    <scope>NUCLEOTIDE SEQUENCE [LARGE SCALE MRNA]</scope>
    <source>
        <tissue>Fat body</tissue>
    </source>
</reference>
<organism>
    <name type="scientific">Xenopus laevis</name>
    <name type="common">African clawed frog</name>
    <dbReference type="NCBI Taxonomy" id="8355"/>
    <lineage>
        <taxon>Eukaryota</taxon>
        <taxon>Metazoa</taxon>
        <taxon>Chordata</taxon>
        <taxon>Craniata</taxon>
        <taxon>Vertebrata</taxon>
        <taxon>Euteleostomi</taxon>
        <taxon>Amphibia</taxon>
        <taxon>Batrachia</taxon>
        <taxon>Anura</taxon>
        <taxon>Pipoidea</taxon>
        <taxon>Pipidae</taxon>
        <taxon>Xenopodinae</taxon>
        <taxon>Xenopus</taxon>
        <taxon>Xenopus</taxon>
    </lineage>
</organism>
<protein>
    <recommendedName>
        <fullName evidence="2">Proton-activated chloride channel</fullName>
        <shortName evidence="2">PAC</shortName>
    </recommendedName>
    <alternativeName>
        <fullName evidence="5">Transmembrane protein 206</fullName>
    </alternativeName>
</protein>
<proteinExistence type="evidence at transcript level"/>
<gene>
    <name evidence="2" type="primary">pacc1</name>
    <name evidence="2" type="synonym">tmem206</name>
</gene>